<dbReference type="EC" id="6.1.1.1" evidence="1"/>
<dbReference type="EMBL" id="AE002160">
    <property type="protein sequence ID" value="AAF39195.1"/>
    <property type="molecule type" value="Genomic_DNA"/>
</dbReference>
<dbReference type="PIR" id="H81713">
    <property type="entry name" value="H81713"/>
</dbReference>
<dbReference type="RefSeq" id="WP_010230180.1">
    <property type="nucleotide sequence ID" value="NZ_CP063055.1"/>
</dbReference>
<dbReference type="SMR" id="Q9PKX8"/>
<dbReference type="GeneID" id="1246376"/>
<dbReference type="KEGG" id="cmu:TC_0332"/>
<dbReference type="eggNOG" id="COG0162">
    <property type="taxonomic scope" value="Bacteria"/>
</dbReference>
<dbReference type="HOGENOM" id="CLU_024003_0_3_0"/>
<dbReference type="OrthoDB" id="9804243at2"/>
<dbReference type="Proteomes" id="UP000000800">
    <property type="component" value="Chromosome"/>
</dbReference>
<dbReference type="GO" id="GO:0005829">
    <property type="term" value="C:cytosol"/>
    <property type="evidence" value="ECO:0007669"/>
    <property type="project" value="TreeGrafter"/>
</dbReference>
<dbReference type="GO" id="GO:0005524">
    <property type="term" value="F:ATP binding"/>
    <property type="evidence" value="ECO:0007669"/>
    <property type="project" value="UniProtKB-UniRule"/>
</dbReference>
<dbReference type="GO" id="GO:0003723">
    <property type="term" value="F:RNA binding"/>
    <property type="evidence" value="ECO:0007669"/>
    <property type="project" value="UniProtKB-KW"/>
</dbReference>
<dbReference type="GO" id="GO:0004831">
    <property type="term" value="F:tyrosine-tRNA ligase activity"/>
    <property type="evidence" value="ECO:0007669"/>
    <property type="project" value="UniProtKB-UniRule"/>
</dbReference>
<dbReference type="GO" id="GO:0006437">
    <property type="term" value="P:tyrosyl-tRNA aminoacylation"/>
    <property type="evidence" value="ECO:0007669"/>
    <property type="project" value="UniProtKB-UniRule"/>
</dbReference>
<dbReference type="CDD" id="cd00165">
    <property type="entry name" value="S4"/>
    <property type="match status" value="1"/>
</dbReference>
<dbReference type="CDD" id="cd00805">
    <property type="entry name" value="TyrRS_core"/>
    <property type="match status" value="1"/>
</dbReference>
<dbReference type="FunFam" id="3.40.50.620:FF:000287">
    <property type="entry name" value="Tyrosine--tRNA ligase"/>
    <property type="match status" value="1"/>
</dbReference>
<dbReference type="Gene3D" id="3.40.50.620">
    <property type="entry name" value="HUPs"/>
    <property type="match status" value="1"/>
</dbReference>
<dbReference type="Gene3D" id="3.10.290.10">
    <property type="entry name" value="RNA-binding S4 domain"/>
    <property type="match status" value="1"/>
</dbReference>
<dbReference type="Gene3D" id="1.10.240.10">
    <property type="entry name" value="Tyrosyl-Transfer RNA Synthetase"/>
    <property type="match status" value="1"/>
</dbReference>
<dbReference type="HAMAP" id="MF_02006">
    <property type="entry name" value="Tyr_tRNA_synth_type1"/>
    <property type="match status" value="1"/>
</dbReference>
<dbReference type="InterPro" id="IPR002305">
    <property type="entry name" value="aa-tRNA-synth_Ic"/>
</dbReference>
<dbReference type="InterPro" id="IPR014729">
    <property type="entry name" value="Rossmann-like_a/b/a_fold"/>
</dbReference>
<dbReference type="InterPro" id="IPR002942">
    <property type="entry name" value="S4_RNA-bd"/>
</dbReference>
<dbReference type="InterPro" id="IPR036986">
    <property type="entry name" value="S4_RNA-bd_sf"/>
</dbReference>
<dbReference type="InterPro" id="IPR054608">
    <property type="entry name" value="SYY-like_C"/>
</dbReference>
<dbReference type="InterPro" id="IPR002307">
    <property type="entry name" value="Tyr-tRNA-ligase"/>
</dbReference>
<dbReference type="InterPro" id="IPR024088">
    <property type="entry name" value="Tyr-tRNA-ligase_bac-type"/>
</dbReference>
<dbReference type="InterPro" id="IPR024107">
    <property type="entry name" value="Tyr-tRNA-ligase_bac_1"/>
</dbReference>
<dbReference type="NCBIfam" id="TIGR00234">
    <property type="entry name" value="tyrS"/>
    <property type="match status" value="1"/>
</dbReference>
<dbReference type="PANTHER" id="PTHR11766:SF0">
    <property type="entry name" value="TYROSINE--TRNA LIGASE, MITOCHONDRIAL"/>
    <property type="match status" value="1"/>
</dbReference>
<dbReference type="PANTHER" id="PTHR11766">
    <property type="entry name" value="TYROSYL-TRNA SYNTHETASE"/>
    <property type="match status" value="1"/>
</dbReference>
<dbReference type="Pfam" id="PF22421">
    <property type="entry name" value="SYY_C-terminal"/>
    <property type="match status" value="1"/>
</dbReference>
<dbReference type="Pfam" id="PF00579">
    <property type="entry name" value="tRNA-synt_1b"/>
    <property type="match status" value="1"/>
</dbReference>
<dbReference type="PRINTS" id="PR01040">
    <property type="entry name" value="TRNASYNTHTYR"/>
</dbReference>
<dbReference type="SMART" id="SM00363">
    <property type="entry name" value="S4"/>
    <property type="match status" value="1"/>
</dbReference>
<dbReference type="SUPFAM" id="SSF55174">
    <property type="entry name" value="Alpha-L RNA-binding motif"/>
    <property type="match status" value="1"/>
</dbReference>
<dbReference type="SUPFAM" id="SSF52374">
    <property type="entry name" value="Nucleotidylyl transferase"/>
    <property type="match status" value="1"/>
</dbReference>
<dbReference type="PROSITE" id="PS50889">
    <property type="entry name" value="S4"/>
    <property type="match status" value="1"/>
</dbReference>
<sequence length="412" mass="45630">MQQLIDSLQKRGILDNSSAGLESLTAPVSAYLGFDPTAPSLHIGHWIGICFLRRLSAYGITPIALVGGATGMIGDPSGKSVERSLLDQEQVLDNSKKIEVALANYLPDIRIVNNADWLGSLSMVDFLRDIGKYFRLGSMLAKDVVKQRVYSEEGISYTEFSYLLLQSYDFAHLFKHHGVVLQCGGSDQWGNITSGIDYIRRKGLGQAFGLTYPLLTDSKGKKIGKTESGTVWLDPELTSPYELFQYFLRLSDQEIPKIARMLTLLDDDEVLALDKRLENDPQAVKRYVAEVIVKDVHGAEGLAQALATTESFFANKGKNITESELAALVQSGVGINVARADVIGKRWLDVVVQLGFCSSKGEARRLIQQRGLYVNQEPLIDEQSVLDGTYLCFDRYILLSQGKKKKQVIDLN</sequence>
<gene>
    <name evidence="1" type="primary">tyrS</name>
    <name type="ordered locus">TC_0332</name>
</gene>
<accession>Q9PKX8</accession>
<protein>
    <recommendedName>
        <fullName evidence="1">Tyrosine--tRNA ligase</fullName>
        <ecNumber evidence="1">6.1.1.1</ecNumber>
    </recommendedName>
    <alternativeName>
        <fullName evidence="1">Tyrosyl-tRNA synthetase</fullName>
        <shortName evidence="1">TyrRS</shortName>
    </alternativeName>
</protein>
<reference key="1">
    <citation type="journal article" date="2000" name="Nucleic Acids Res.">
        <title>Genome sequences of Chlamydia trachomatis MoPn and Chlamydia pneumoniae AR39.</title>
        <authorList>
            <person name="Read T.D."/>
            <person name="Brunham R.C."/>
            <person name="Shen C."/>
            <person name="Gill S.R."/>
            <person name="Heidelberg J.F."/>
            <person name="White O."/>
            <person name="Hickey E.K."/>
            <person name="Peterson J.D."/>
            <person name="Utterback T.R."/>
            <person name="Berry K.J."/>
            <person name="Bass S."/>
            <person name="Linher K.D."/>
            <person name="Weidman J.F."/>
            <person name="Khouri H.M."/>
            <person name="Craven B."/>
            <person name="Bowman C."/>
            <person name="Dodson R.J."/>
            <person name="Gwinn M.L."/>
            <person name="Nelson W.C."/>
            <person name="DeBoy R.T."/>
            <person name="Kolonay J.F."/>
            <person name="McClarty G."/>
            <person name="Salzberg S.L."/>
            <person name="Eisen J.A."/>
            <person name="Fraser C.M."/>
        </authorList>
    </citation>
    <scope>NUCLEOTIDE SEQUENCE [LARGE SCALE GENOMIC DNA]</scope>
    <source>
        <strain>MoPn / Nigg</strain>
    </source>
</reference>
<organism>
    <name type="scientific">Chlamydia muridarum (strain MoPn / Nigg)</name>
    <dbReference type="NCBI Taxonomy" id="243161"/>
    <lineage>
        <taxon>Bacteria</taxon>
        <taxon>Pseudomonadati</taxon>
        <taxon>Chlamydiota</taxon>
        <taxon>Chlamydiia</taxon>
        <taxon>Chlamydiales</taxon>
        <taxon>Chlamydiaceae</taxon>
        <taxon>Chlamydia/Chlamydophila group</taxon>
        <taxon>Chlamydia</taxon>
    </lineage>
</organism>
<evidence type="ECO:0000255" key="1">
    <source>
        <dbReference type="HAMAP-Rule" id="MF_02006"/>
    </source>
</evidence>
<name>SYY_CHLMU</name>
<keyword id="KW-0030">Aminoacyl-tRNA synthetase</keyword>
<keyword id="KW-0067">ATP-binding</keyword>
<keyword id="KW-0963">Cytoplasm</keyword>
<keyword id="KW-0436">Ligase</keyword>
<keyword id="KW-0547">Nucleotide-binding</keyword>
<keyword id="KW-0648">Protein biosynthesis</keyword>
<keyword id="KW-0694">RNA-binding</keyword>
<comment type="function">
    <text evidence="1">Catalyzes the attachment of tyrosine to tRNA(Tyr) in a two-step reaction: tyrosine is first activated by ATP to form Tyr-AMP and then transferred to the acceptor end of tRNA(Tyr).</text>
</comment>
<comment type="catalytic activity">
    <reaction evidence="1">
        <text>tRNA(Tyr) + L-tyrosine + ATP = L-tyrosyl-tRNA(Tyr) + AMP + diphosphate + H(+)</text>
        <dbReference type="Rhea" id="RHEA:10220"/>
        <dbReference type="Rhea" id="RHEA-COMP:9706"/>
        <dbReference type="Rhea" id="RHEA-COMP:9707"/>
        <dbReference type="ChEBI" id="CHEBI:15378"/>
        <dbReference type="ChEBI" id="CHEBI:30616"/>
        <dbReference type="ChEBI" id="CHEBI:33019"/>
        <dbReference type="ChEBI" id="CHEBI:58315"/>
        <dbReference type="ChEBI" id="CHEBI:78442"/>
        <dbReference type="ChEBI" id="CHEBI:78536"/>
        <dbReference type="ChEBI" id="CHEBI:456215"/>
        <dbReference type="EC" id="6.1.1.1"/>
    </reaction>
</comment>
<comment type="subunit">
    <text evidence="1">Homodimer.</text>
</comment>
<comment type="subcellular location">
    <subcellularLocation>
        <location evidence="1">Cytoplasm</location>
    </subcellularLocation>
</comment>
<comment type="similarity">
    <text evidence="1">Belongs to the class-I aminoacyl-tRNA synthetase family. TyrS type 1 subfamily.</text>
</comment>
<feature type="chain" id="PRO_0000055649" description="Tyrosine--tRNA ligase">
    <location>
        <begin position="1"/>
        <end position="412"/>
    </location>
</feature>
<feature type="domain" description="S4 RNA-binding" evidence="1">
    <location>
        <begin position="345"/>
        <end position="412"/>
    </location>
</feature>
<feature type="short sequence motif" description="'HIGH' region">
    <location>
        <begin position="36"/>
        <end position="45"/>
    </location>
</feature>
<feature type="short sequence motif" description="'KMSKS' region">
    <location>
        <begin position="222"/>
        <end position="226"/>
    </location>
</feature>
<feature type="binding site" evidence="1">
    <location>
        <position position="31"/>
    </location>
    <ligand>
        <name>L-tyrosine</name>
        <dbReference type="ChEBI" id="CHEBI:58315"/>
    </ligand>
</feature>
<feature type="binding site" evidence="1">
    <location>
        <position position="162"/>
    </location>
    <ligand>
        <name>L-tyrosine</name>
        <dbReference type="ChEBI" id="CHEBI:58315"/>
    </ligand>
</feature>
<feature type="binding site" evidence="1">
    <location>
        <position position="166"/>
    </location>
    <ligand>
        <name>L-tyrosine</name>
        <dbReference type="ChEBI" id="CHEBI:58315"/>
    </ligand>
</feature>
<feature type="binding site" evidence="1">
    <location>
        <position position="225"/>
    </location>
    <ligand>
        <name>ATP</name>
        <dbReference type="ChEBI" id="CHEBI:30616"/>
    </ligand>
</feature>
<proteinExistence type="inferred from homology"/>